<organism>
    <name type="scientific">Streptococcus pneumoniae (strain ATCC 700669 / Spain 23F-1)</name>
    <dbReference type="NCBI Taxonomy" id="561276"/>
    <lineage>
        <taxon>Bacteria</taxon>
        <taxon>Bacillati</taxon>
        <taxon>Bacillota</taxon>
        <taxon>Bacilli</taxon>
        <taxon>Lactobacillales</taxon>
        <taxon>Streptococcaceae</taxon>
        <taxon>Streptococcus</taxon>
    </lineage>
</organism>
<protein>
    <recommendedName>
        <fullName evidence="1">V-type ATP synthase beta chain</fullName>
    </recommendedName>
    <alternativeName>
        <fullName evidence="1">V-ATPase subunit B</fullName>
    </alternativeName>
</protein>
<dbReference type="EMBL" id="FM211187">
    <property type="protein sequence ID" value="CAR69011.1"/>
    <property type="molecule type" value="Genomic_DNA"/>
</dbReference>
<dbReference type="RefSeq" id="WP_000111248.1">
    <property type="nucleotide sequence ID" value="NC_011900.1"/>
</dbReference>
<dbReference type="SMR" id="B8ZK30"/>
<dbReference type="KEGG" id="sne:SPN23F12080"/>
<dbReference type="HOGENOM" id="CLU_022916_0_0_9"/>
<dbReference type="GO" id="GO:0005524">
    <property type="term" value="F:ATP binding"/>
    <property type="evidence" value="ECO:0007669"/>
    <property type="project" value="UniProtKB-UniRule"/>
</dbReference>
<dbReference type="GO" id="GO:0046933">
    <property type="term" value="F:proton-transporting ATP synthase activity, rotational mechanism"/>
    <property type="evidence" value="ECO:0007669"/>
    <property type="project" value="UniProtKB-UniRule"/>
</dbReference>
<dbReference type="GO" id="GO:0042777">
    <property type="term" value="P:proton motive force-driven plasma membrane ATP synthesis"/>
    <property type="evidence" value="ECO:0007669"/>
    <property type="project" value="UniProtKB-UniRule"/>
</dbReference>
<dbReference type="CDD" id="cd18112">
    <property type="entry name" value="ATP-synt_V_A-type_beta_C"/>
    <property type="match status" value="1"/>
</dbReference>
<dbReference type="CDD" id="cd18118">
    <property type="entry name" value="ATP-synt_V_A-type_beta_N"/>
    <property type="match status" value="1"/>
</dbReference>
<dbReference type="CDD" id="cd01135">
    <property type="entry name" value="V_A-ATPase_B"/>
    <property type="match status" value="1"/>
</dbReference>
<dbReference type="Gene3D" id="3.40.50.12240">
    <property type="match status" value="1"/>
</dbReference>
<dbReference type="HAMAP" id="MF_00310">
    <property type="entry name" value="ATP_synth_B_arch"/>
    <property type="match status" value="1"/>
</dbReference>
<dbReference type="InterPro" id="IPR055190">
    <property type="entry name" value="ATP-synt_VA_C"/>
</dbReference>
<dbReference type="InterPro" id="IPR020003">
    <property type="entry name" value="ATPase_a/bsu_AS"/>
</dbReference>
<dbReference type="InterPro" id="IPR004100">
    <property type="entry name" value="ATPase_F1/V1/A1_a/bsu_N"/>
</dbReference>
<dbReference type="InterPro" id="IPR000194">
    <property type="entry name" value="ATPase_F1/V1/A1_a/bsu_nucl-bd"/>
</dbReference>
<dbReference type="InterPro" id="IPR027417">
    <property type="entry name" value="P-loop_NTPase"/>
</dbReference>
<dbReference type="InterPro" id="IPR022879">
    <property type="entry name" value="V-ATPase_su_B/beta"/>
</dbReference>
<dbReference type="NCBIfam" id="NF003235">
    <property type="entry name" value="PRK04196.1"/>
    <property type="match status" value="1"/>
</dbReference>
<dbReference type="PANTHER" id="PTHR43389">
    <property type="entry name" value="V-TYPE PROTON ATPASE SUBUNIT B"/>
    <property type="match status" value="1"/>
</dbReference>
<dbReference type="PANTHER" id="PTHR43389:SF4">
    <property type="entry name" value="V-TYPE PROTON ATPASE SUBUNIT B"/>
    <property type="match status" value="1"/>
</dbReference>
<dbReference type="Pfam" id="PF00006">
    <property type="entry name" value="ATP-synt_ab"/>
    <property type="match status" value="1"/>
</dbReference>
<dbReference type="Pfam" id="PF02874">
    <property type="entry name" value="ATP-synt_ab_N"/>
    <property type="match status" value="1"/>
</dbReference>
<dbReference type="Pfam" id="PF22919">
    <property type="entry name" value="ATP-synt_VA_C"/>
    <property type="match status" value="1"/>
</dbReference>
<dbReference type="PIRSF" id="PIRSF039114">
    <property type="entry name" value="V-ATPsynth_beta/V-ATPase_B"/>
    <property type="match status" value="1"/>
</dbReference>
<dbReference type="SUPFAM" id="SSF47917">
    <property type="entry name" value="C-terminal domain of alpha and beta subunits of F1 ATP synthase"/>
    <property type="match status" value="1"/>
</dbReference>
<dbReference type="SUPFAM" id="SSF52540">
    <property type="entry name" value="P-loop containing nucleoside triphosphate hydrolases"/>
    <property type="match status" value="1"/>
</dbReference>
<dbReference type="PROSITE" id="PS00152">
    <property type="entry name" value="ATPASE_ALPHA_BETA"/>
    <property type="match status" value="1"/>
</dbReference>
<reference key="1">
    <citation type="journal article" date="2009" name="J. Bacteriol.">
        <title>Role of conjugative elements in the evolution of the multidrug-resistant pandemic clone Streptococcus pneumoniae Spain23F ST81.</title>
        <authorList>
            <person name="Croucher N.J."/>
            <person name="Walker D."/>
            <person name="Romero P."/>
            <person name="Lennard N."/>
            <person name="Paterson G.K."/>
            <person name="Bason N.C."/>
            <person name="Mitchell A.M."/>
            <person name="Quail M.A."/>
            <person name="Andrew P.W."/>
            <person name="Parkhill J."/>
            <person name="Bentley S.D."/>
            <person name="Mitchell T.J."/>
        </authorList>
    </citation>
    <scope>NUCLEOTIDE SEQUENCE [LARGE SCALE GENOMIC DNA]</scope>
    <source>
        <strain>ATCC 700669 / Spain 23F-1</strain>
    </source>
</reference>
<gene>
    <name evidence="1" type="primary">atpB</name>
    <name type="ordered locus">SPN23F12080</name>
</gene>
<proteinExistence type="inferred from homology"/>
<name>VATB_STRPJ</name>
<feature type="chain" id="PRO_1000132891" description="V-type ATP synthase beta chain">
    <location>
        <begin position="1"/>
        <end position="461"/>
    </location>
</feature>
<sequence length="461" mass="51595">MSVIKEYRTASEVVGPLMIVEQVNNVSYNELVEIQLHNGEIRRGQVLEIHEDKAMVQLFEGSSGINLEKSKIRFAGHALELAVSEDMVGRIFNGMGKPIDGGPDLIPEKYLDIDGQAINPVSRDYPDEFIQTGISSIDHLNTLVRGQKLPVFSGSGLPHNELAAQIARQATVLNSDENFAVVFAAMGITFEEAEFFMEELRKTGAIDRSVLFMNLANDPAIERIATPRIALTAAEYLAFEKDMHVLVIMTDMTNYCEALREVSAARREVPGRRGYPGYLYTNLSTLYERAGRLVGKKGSVTQIPILTMPEDDITHPIPDLTGYITEGQIILSHELYNQGYRPPINVLPSLSRLKDKGSGEGKTRGDHAPTMNQLFAAYAQGKKVEELAVVLGESALSDVDKLYVRFTKRFEEEYINQGFYKNRNIEDTLNLGWELLSILPRTELKRIKDDLLDKYLPLVEV</sequence>
<keyword id="KW-0066">ATP synthesis</keyword>
<keyword id="KW-0375">Hydrogen ion transport</keyword>
<keyword id="KW-0406">Ion transport</keyword>
<keyword id="KW-0813">Transport</keyword>
<accession>B8ZK30</accession>
<evidence type="ECO:0000255" key="1">
    <source>
        <dbReference type="HAMAP-Rule" id="MF_00310"/>
    </source>
</evidence>
<comment type="function">
    <text evidence="1">Produces ATP from ADP in the presence of a proton gradient across the membrane. The V-type beta chain is a regulatory subunit.</text>
</comment>
<comment type="similarity">
    <text evidence="1">Belongs to the ATPase alpha/beta chains family.</text>
</comment>